<feature type="chain" id="PRO_0000375117" description="B3 domain-containing transcription repressor VAL1">
    <location>
        <begin position="1"/>
        <end position="790"/>
    </location>
</feature>
<feature type="DNA-binding region" description="TF-B3" evidence="2">
    <location>
        <begin position="295"/>
        <end position="396"/>
    </location>
</feature>
<feature type="zinc finger region" description="CW-type" evidence="3">
    <location>
        <begin position="538"/>
        <end position="588"/>
    </location>
</feature>
<feature type="region of interest" description="Disordered" evidence="4">
    <location>
        <begin position="234"/>
        <end position="260"/>
    </location>
</feature>
<feature type="region of interest" description="Disordered" evidence="4">
    <location>
        <begin position="400"/>
        <end position="429"/>
    </location>
</feature>
<feature type="region of interest" description="Disordered" evidence="4">
    <location>
        <begin position="446"/>
        <end position="468"/>
    </location>
</feature>
<feature type="region of interest" description="Disordered" evidence="4">
    <location>
        <begin position="689"/>
        <end position="737"/>
    </location>
</feature>
<feature type="coiled-coil region" evidence="1">
    <location>
        <begin position="685"/>
        <end position="732"/>
    </location>
</feature>
<feature type="compositionally biased region" description="Polar residues" evidence="4">
    <location>
        <begin position="405"/>
        <end position="429"/>
    </location>
</feature>
<feature type="compositionally biased region" description="Basic and acidic residues" evidence="4">
    <location>
        <begin position="694"/>
        <end position="724"/>
    </location>
</feature>
<feature type="binding site" evidence="3">
    <location>
        <position position="547"/>
    </location>
    <ligand>
        <name>Zn(2+)</name>
        <dbReference type="ChEBI" id="CHEBI:29105"/>
    </ligand>
</feature>
<feature type="binding site" evidence="3">
    <location>
        <position position="550"/>
    </location>
    <ligand>
        <name>Zn(2+)</name>
        <dbReference type="ChEBI" id="CHEBI:29105"/>
    </ligand>
</feature>
<feature type="binding site" evidence="3">
    <location>
        <position position="568"/>
    </location>
    <ligand>
        <name>Zn(2+)</name>
        <dbReference type="ChEBI" id="CHEBI:29105"/>
    </ligand>
</feature>
<feature type="binding site" evidence="3">
    <location>
        <position position="580"/>
    </location>
    <ligand>
        <name>Zn(2+)</name>
        <dbReference type="ChEBI" id="CHEBI:29105"/>
    </ligand>
</feature>
<feature type="turn" evidence="10">
    <location>
        <begin position="14"/>
        <end position="16"/>
    </location>
</feature>
<feature type="strand" evidence="10">
    <location>
        <begin position="25"/>
        <end position="29"/>
    </location>
</feature>
<feature type="strand" evidence="10">
    <location>
        <begin position="35"/>
        <end position="38"/>
    </location>
</feature>
<feature type="helix" evidence="10">
    <location>
        <begin position="40"/>
        <end position="47"/>
    </location>
</feature>
<feature type="helix" evidence="10">
    <location>
        <begin position="51"/>
        <end position="55"/>
    </location>
</feature>
<feature type="strand" evidence="10">
    <location>
        <begin position="62"/>
        <end position="64"/>
    </location>
</feature>
<feature type="turn" evidence="10">
    <location>
        <begin position="66"/>
        <end position="68"/>
    </location>
</feature>
<feature type="strand" evidence="10">
    <location>
        <begin position="71"/>
        <end position="73"/>
    </location>
</feature>
<feature type="helix" evidence="10">
    <location>
        <begin position="77"/>
        <end position="82"/>
    </location>
</feature>
<feature type="strand" evidence="10">
    <location>
        <begin position="83"/>
        <end position="85"/>
    </location>
</feature>
<feature type="strand" evidence="10">
    <location>
        <begin position="91"/>
        <end position="93"/>
    </location>
</feature>
<feature type="helix" evidence="10">
    <location>
        <begin position="94"/>
        <end position="97"/>
    </location>
</feature>
<feature type="strand" evidence="13">
    <location>
        <begin position="290"/>
        <end position="298"/>
    </location>
</feature>
<feature type="helix" evidence="13">
    <location>
        <begin position="301"/>
        <end position="304"/>
    </location>
</feature>
<feature type="strand" evidence="11">
    <location>
        <begin position="305"/>
        <end position="307"/>
    </location>
</feature>
<feature type="strand" evidence="13">
    <location>
        <begin position="309"/>
        <end position="312"/>
    </location>
</feature>
<feature type="helix" evidence="13">
    <location>
        <begin position="314"/>
        <end position="320"/>
    </location>
</feature>
<feature type="strand" evidence="12">
    <location>
        <begin position="326"/>
        <end position="328"/>
    </location>
</feature>
<feature type="strand" evidence="13">
    <location>
        <begin position="330"/>
        <end position="336"/>
    </location>
</feature>
<feature type="strand" evidence="13">
    <location>
        <begin position="341"/>
        <end position="351"/>
    </location>
</feature>
<feature type="strand" evidence="13">
    <location>
        <begin position="354"/>
        <end position="360"/>
    </location>
</feature>
<feature type="helix" evidence="13">
    <location>
        <begin position="363"/>
        <end position="368"/>
    </location>
</feature>
<feature type="strand" evidence="13">
    <location>
        <begin position="376"/>
        <end position="383"/>
    </location>
</feature>
<feature type="turn" evidence="13">
    <location>
        <begin position="384"/>
        <end position="386"/>
    </location>
</feature>
<feature type="strand" evidence="13">
    <location>
        <begin position="387"/>
        <end position="393"/>
    </location>
</feature>
<accession>Q8W4L5</accession>
<accession>O04346</accession>
<keyword id="KW-0002">3D-structure</keyword>
<keyword id="KW-0175">Coiled coil</keyword>
<keyword id="KW-0238">DNA-binding</keyword>
<keyword id="KW-0479">Metal-binding</keyword>
<keyword id="KW-0539">Nucleus</keyword>
<keyword id="KW-1185">Reference proteome</keyword>
<keyword id="KW-0678">Repressor</keyword>
<keyword id="KW-0804">Transcription</keyword>
<keyword id="KW-0805">Transcription regulation</keyword>
<keyword id="KW-0862">Zinc</keyword>
<keyword id="KW-0863">Zinc-finger</keyword>
<comment type="function">
    <text evidence="5 6 7">Transcriptional repressor of gene expression involved in embryonic pathways, such as LEC1, ABI3, and FUS3. Repressor of the sugar-inducible genes involved in the seed maturation program in seedlings. Plays an essential role in regulating the transition from seed maturation to seedling growth. Functionally redundant with VAL2/HSL1.</text>
</comment>
<comment type="subunit">
    <text evidence="8">Interacts with SNL1.</text>
</comment>
<comment type="interaction">
    <interactant intactId="EBI-2616403">
        <id>Q8W4L5</id>
    </interactant>
    <interactant intactId="EBI-2349513">
        <id>Q84MC7</id>
        <label>PYL9</label>
    </interactant>
    <organismsDiffer>false</organismsDiffer>
    <experiments>3</experiments>
</comment>
<comment type="subcellular location">
    <subcellularLocation>
        <location evidence="2 5">Nucleus</location>
    </subcellularLocation>
</comment>
<comment type="tissue specificity">
    <text evidence="5">Expressed in flowers and at lower levels in roots, stems and leaves.</text>
</comment>
<comment type="sequence caution" evidence="9">
    <conflict type="erroneous gene model prediction">
        <sequence resource="EMBL-CDS" id="AAB63089"/>
    </conflict>
</comment>
<name>VAL1_ARATH</name>
<gene>
    <name type="primary">VAL1</name>
    <name type="synonym">HSI2</name>
    <name type="ordered locus">At2g30470</name>
    <name type="ORF">T6B20.17</name>
</gene>
<protein>
    <recommendedName>
        <fullName>B3 domain-containing transcription repressor VAL1</fullName>
    </recommendedName>
    <alternativeName>
        <fullName>Protein HIGH-LEVEL EXPRESSION OF SUGAR-INDUCIBLE 2</fullName>
    </alternativeName>
    <alternativeName>
        <fullName>Protein VP1/ABI3-LIKE 1</fullName>
    </alternativeName>
</protein>
<proteinExistence type="evidence at protein level"/>
<dbReference type="EMBL" id="AB206553">
    <property type="protein sequence ID" value="BAD90970.1"/>
    <property type="molecule type" value="mRNA"/>
</dbReference>
<dbReference type="EMBL" id="U93215">
    <property type="protein sequence ID" value="AAB63089.1"/>
    <property type="status" value="ALT_SEQ"/>
    <property type="molecule type" value="Genomic_DNA"/>
</dbReference>
<dbReference type="EMBL" id="CP002685">
    <property type="protein sequence ID" value="AEC08392.1"/>
    <property type="molecule type" value="Genomic_DNA"/>
</dbReference>
<dbReference type="EMBL" id="AY062492">
    <property type="protein sequence ID" value="AAL32570.1"/>
    <property type="molecule type" value="mRNA"/>
</dbReference>
<dbReference type="PIR" id="G84708">
    <property type="entry name" value="G84708"/>
</dbReference>
<dbReference type="RefSeq" id="NP_850146.1">
    <property type="nucleotide sequence ID" value="NM_179815.3"/>
</dbReference>
<dbReference type="PDB" id="5YUG">
    <property type="method" value="X-ray"/>
    <property type="resolution" value="1.57 A"/>
    <property type="chains" value="A/B/E/G=1-110"/>
</dbReference>
<dbReference type="PDB" id="5YUH">
    <property type="method" value="X-ray"/>
    <property type="resolution" value="1.80 A"/>
    <property type="chains" value="A=1-110"/>
</dbReference>
<dbReference type="PDB" id="5YZY">
    <property type="method" value="X-ray"/>
    <property type="resolution" value="2.61 A"/>
    <property type="chains" value="C=273-400"/>
</dbReference>
<dbReference type="PDB" id="5YZZ">
    <property type="method" value="X-ray"/>
    <property type="resolution" value="2.58 A"/>
    <property type="chains" value="C=273-400"/>
</dbReference>
<dbReference type="PDB" id="5Z00">
    <property type="method" value="X-ray"/>
    <property type="resolution" value="2.59 A"/>
    <property type="chains" value="C/G/K/M=273-400"/>
</dbReference>
<dbReference type="PDB" id="6FAS">
    <property type="method" value="X-ray"/>
    <property type="resolution" value="1.90 A"/>
    <property type="chains" value="A/B=287-397"/>
</dbReference>
<dbReference type="PDB" id="6J9A">
    <property type="method" value="X-ray"/>
    <property type="resolution" value="2.92 A"/>
    <property type="chains" value="A=273-403"/>
</dbReference>
<dbReference type="PDBsum" id="5YUG"/>
<dbReference type="PDBsum" id="5YUH"/>
<dbReference type="PDBsum" id="5YZY"/>
<dbReference type="PDBsum" id="5YZZ"/>
<dbReference type="PDBsum" id="5Z00"/>
<dbReference type="PDBsum" id="6FAS"/>
<dbReference type="PDBsum" id="6J9A"/>
<dbReference type="SMR" id="Q8W4L5"/>
<dbReference type="BioGRID" id="2946">
    <property type="interactions" value="9"/>
</dbReference>
<dbReference type="FunCoup" id="Q8W4L5">
    <property type="interactions" value="37"/>
</dbReference>
<dbReference type="IntAct" id="Q8W4L5">
    <property type="interactions" value="6"/>
</dbReference>
<dbReference type="MINT" id="Q8W4L5"/>
<dbReference type="STRING" id="3702.Q8W4L5"/>
<dbReference type="iPTMnet" id="Q8W4L5"/>
<dbReference type="PaxDb" id="3702-AT2G30470.1"/>
<dbReference type="ProteomicsDB" id="243257"/>
<dbReference type="EnsemblPlants" id="AT2G30470.1">
    <property type="protein sequence ID" value="AT2G30470.1"/>
    <property type="gene ID" value="AT2G30470"/>
</dbReference>
<dbReference type="GeneID" id="817597"/>
<dbReference type="Gramene" id="AT2G30470.1">
    <property type="protein sequence ID" value="AT2G30470.1"/>
    <property type="gene ID" value="AT2G30470"/>
</dbReference>
<dbReference type="KEGG" id="ath:AT2G30470"/>
<dbReference type="Araport" id="AT2G30470"/>
<dbReference type="TAIR" id="AT2G30470">
    <property type="gene designation" value="HSI2"/>
</dbReference>
<dbReference type="eggNOG" id="ENOG502QWC1">
    <property type="taxonomic scope" value="Eukaryota"/>
</dbReference>
<dbReference type="HOGENOM" id="CLU_015907_0_0_1"/>
<dbReference type="InParanoid" id="Q8W4L5"/>
<dbReference type="OMA" id="GWRECRT"/>
<dbReference type="PhylomeDB" id="Q8W4L5"/>
<dbReference type="PRO" id="PR:Q8W4L5"/>
<dbReference type="Proteomes" id="UP000006548">
    <property type="component" value="Chromosome 2"/>
</dbReference>
<dbReference type="ExpressionAtlas" id="Q8W4L5">
    <property type="expression patterns" value="baseline and differential"/>
</dbReference>
<dbReference type="GO" id="GO:0005739">
    <property type="term" value="C:mitochondrion"/>
    <property type="evidence" value="ECO:0007005"/>
    <property type="project" value="TAIR"/>
</dbReference>
<dbReference type="GO" id="GO:0005634">
    <property type="term" value="C:nucleus"/>
    <property type="evidence" value="ECO:0000314"/>
    <property type="project" value="TAIR"/>
</dbReference>
<dbReference type="GO" id="GO:0003677">
    <property type="term" value="F:DNA binding"/>
    <property type="evidence" value="ECO:0007669"/>
    <property type="project" value="UniProtKB-KW"/>
</dbReference>
<dbReference type="GO" id="GO:0003700">
    <property type="term" value="F:DNA-binding transcription factor activity"/>
    <property type="evidence" value="ECO:0000250"/>
    <property type="project" value="TAIR"/>
</dbReference>
<dbReference type="GO" id="GO:0008270">
    <property type="term" value="F:zinc ion binding"/>
    <property type="evidence" value="ECO:0007669"/>
    <property type="project" value="UniProtKB-KW"/>
</dbReference>
<dbReference type="GO" id="GO:0045892">
    <property type="term" value="P:negative regulation of DNA-templated transcription"/>
    <property type="evidence" value="ECO:0000314"/>
    <property type="project" value="TAIR"/>
</dbReference>
<dbReference type="GO" id="GO:0009737">
    <property type="term" value="P:response to abscisic acid"/>
    <property type="evidence" value="ECO:0000304"/>
    <property type="project" value="TAIR"/>
</dbReference>
<dbReference type="GO" id="GO:0009744">
    <property type="term" value="P:response to sucrose"/>
    <property type="evidence" value="ECO:0000304"/>
    <property type="project" value="TAIR"/>
</dbReference>
<dbReference type="CDD" id="cd10017">
    <property type="entry name" value="B3_DNA"/>
    <property type="match status" value="1"/>
</dbReference>
<dbReference type="FunFam" id="2.40.330.10:FF:000006">
    <property type="entry name" value="B3 domain-containing transcription repressor VAL1"/>
    <property type="match status" value="1"/>
</dbReference>
<dbReference type="Gene3D" id="3.30.40.100">
    <property type="match status" value="1"/>
</dbReference>
<dbReference type="Gene3D" id="2.40.330.10">
    <property type="entry name" value="DNA-binding pseudobarrel domain"/>
    <property type="match status" value="1"/>
</dbReference>
<dbReference type="InterPro" id="IPR003340">
    <property type="entry name" value="B3_DNA-bd"/>
</dbReference>
<dbReference type="InterPro" id="IPR015300">
    <property type="entry name" value="DNA-bd_pseudobarrel_sf"/>
</dbReference>
<dbReference type="InterPro" id="IPR011124">
    <property type="entry name" value="Znf_CW"/>
</dbReference>
<dbReference type="PANTHER" id="PTHR46245">
    <property type="entry name" value="B3 DOMAIN-CONTAINING PROTEIN OS07G0563300"/>
    <property type="match status" value="1"/>
</dbReference>
<dbReference type="PANTHER" id="PTHR46245:SF3">
    <property type="entry name" value="B3 DOMAIN-CONTAINING TRANSCRIPTION REPRESSOR VAL1"/>
    <property type="match status" value="1"/>
</dbReference>
<dbReference type="Pfam" id="PF02362">
    <property type="entry name" value="B3"/>
    <property type="match status" value="1"/>
</dbReference>
<dbReference type="Pfam" id="PF07496">
    <property type="entry name" value="zf-CW"/>
    <property type="match status" value="1"/>
</dbReference>
<dbReference type="SMART" id="SM01019">
    <property type="entry name" value="B3"/>
    <property type="match status" value="1"/>
</dbReference>
<dbReference type="SUPFAM" id="SSF101936">
    <property type="entry name" value="DNA-binding pseudobarrel domain"/>
    <property type="match status" value="1"/>
</dbReference>
<dbReference type="PROSITE" id="PS50863">
    <property type="entry name" value="B3"/>
    <property type="match status" value="1"/>
</dbReference>
<dbReference type="PROSITE" id="PS51050">
    <property type="entry name" value="ZF_CW"/>
    <property type="match status" value="1"/>
</dbReference>
<sequence>MFEVKMGSKMCMNASCGTTSTVEWKKGWPLRSGLLADLCYRCGSAYESSLFCEQFHKDQSGWRECYLCSKRLHCGCIASKVTIELMDYGGVGCSTCACCHQLNLNTRGENPGVFSRLPMKTLADRQHVNGESGGRNEGDLFSQPLVMGGDKREEFMPHRGFGKLMSPESTTTGHRLDAAGEMHESSPLQPSLNMGLAVNPFSPSFATEAVEGMKHISPSQSNMVHCSASNILQKPSRPAISTPPVASKSAQARIGRPPVEGRGRGHLLPRYWPKYTDKEVQQISGNLNLNIVPLFEKTLSASDAGRIGRLVLPKACAEAYFPPISQSEGIPLKIQDVRGREWTFQFRYWPNNNSRMYVLEGVTPCIQSMMLQAGDTVTFSRVDPGGKLIMGSRKAANAGDMQGCGLTNGTSTEDTSSSGVTENPPSINGSSCISLIPKELNGMPENLNSETNGGRIGDDPTRVKEKKRTRTIGAKNKRLLLHSEESMELRLTWEEAQDLLRPSPSVKPTIVVIEEQEIEEYDEPPVFGKRTIVTTKPSGEQERWATCDDCSKWRRLPVDALLSFKWTCIDNVWDVSRCSCSAPEESLKELENVLKVGREHKKRRTGESQAAKSQQEPCGLDALASAAVLGDTIGEPEVATTTRHPRHRAGCSCIVCIQPPSGKGRHKPTCGCTVCSTVKRRFKTLMMRRKKKQLERDVTAAEDKKKKDMELAESDKSKEEKEVNTARIDLNSDPYNKEDVEAVAVEKEESRKRAIGQCSGVVAQDASDVLGVTELEGEGKNVREEPRVSS</sequence>
<organism>
    <name type="scientific">Arabidopsis thaliana</name>
    <name type="common">Mouse-ear cress</name>
    <dbReference type="NCBI Taxonomy" id="3702"/>
    <lineage>
        <taxon>Eukaryota</taxon>
        <taxon>Viridiplantae</taxon>
        <taxon>Streptophyta</taxon>
        <taxon>Embryophyta</taxon>
        <taxon>Tracheophyta</taxon>
        <taxon>Spermatophyta</taxon>
        <taxon>Magnoliopsida</taxon>
        <taxon>eudicotyledons</taxon>
        <taxon>Gunneridae</taxon>
        <taxon>Pentapetalae</taxon>
        <taxon>rosids</taxon>
        <taxon>malvids</taxon>
        <taxon>Brassicales</taxon>
        <taxon>Brassicaceae</taxon>
        <taxon>Camelineae</taxon>
        <taxon>Arabidopsis</taxon>
    </lineage>
</organism>
<evidence type="ECO:0000255" key="1"/>
<evidence type="ECO:0000255" key="2">
    <source>
        <dbReference type="PROSITE-ProRule" id="PRU00326"/>
    </source>
</evidence>
<evidence type="ECO:0000255" key="3">
    <source>
        <dbReference type="PROSITE-ProRule" id="PRU00454"/>
    </source>
</evidence>
<evidence type="ECO:0000256" key="4">
    <source>
        <dbReference type="SAM" id="MobiDB-lite"/>
    </source>
</evidence>
<evidence type="ECO:0000269" key="5">
    <source>
    </source>
</evidence>
<evidence type="ECO:0000269" key="6">
    <source>
    </source>
</evidence>
<evidence type="ECO:0000269" key="7">
    <source>
    </source>
</evidence>
<evidence type="ECO:0000269" key="8">
    <source>
    </source>
</evidence>
<evidence type="ECO:0000305" key="9"/>
<evidence type="ECO:0007829" key="10">
    <source>
        <dbReference type="PDB" id="5YUG"/>
    </source>
</evidence>
<evidence type="ECO:0007829" key="11">
    <source>
        <dbReference type="PDB" id="5YZY"/>
    </source>
</evidence>
<evidence type="ECO:0007829" key="12">
    <source>
        <dbReference type="PDB" id="5YZZ"/>
    </source>
</evidence>
<evidence type="ECO:0007829" key="13">
    <source>
        <dbReference type="PDB" id="6FAS"/>
    </source>
</evidence>
<reference key="1">
    <citation type="journal article" date="2005" name="Plant Physiol.">
        <title>Analysis of a sugar response mutant of Arabidopsis identified a novel B3 domain protein that functions as an active transcriptional repressor.</title>
        <authorList>
            <person name="Tsukagoshi H."/>
            <person name="Saijo T."/>
            <person name="Shibata D."/>
            <person name="Morikami A."/>
            <person name="Nakamura K."/>
        </authorList>
    </citation>
    <scope>NUCLEOTIDE SEQUENCE [MRNA]</scope>
    <scope>FUNCTION</scope>
    <scope>SUBCELLULAR LOCATION</scope>
    <scope>TISSUE SPECIFICITY</scope>
    <source>
        <strain>cv. Columbia</strain>
    </source>
</reference>
<reference key="2">
    <citation type="journal article" date="1999" name="Nature">
        <title>Sequence and analysis of chromosome 2 of the plant Arabidopsis thaliana.</title>
        <authorList>
            <person name="Lin X."/>
            <person name="Kaul S."/>
            <person name="Rounsley S.D."/>
            <person name="Shea T.P."/>
            <person name="Benito M.-I."/>
            <person name="Town C.D."/>
            <person name="Fujii C.Y."/>
            <person name="Mason T.M."/>
            <person name="Bowman C.L."/>
            <person name="Barnstead M.E."/>
            <person name="Feldblyum T.V."/>
            <person name="Buell C.R."/>
            <person name="Ketchum K.A."/>
            <person name="Lee J.J."/>
            <person name="Ronning C.M."/>
            <person name="Koo H.L."/>
            <person name="Moffat K.S."/>
            <person name="Cronin L.A."/>
            <person name="Shen M."/>
            <person name="Pai G."/>
            <person name="Van Aken S."/>
            <person name="Umayam L."/>
            <person name="Tallon L.J."/>
            <person name="Gill J.E."/>
            <person name="Adams M.D."/>
            <person name="Carrera A.J."/>
            <person name="Creasy T.H."/>
            <person name="Goodman H.M."/>
            <person name="Somerville C.R."/>
            <person name="Copenhaver G.P."/>
            <person name="Preuss D."/>
            <person name="Nierman W.C."/>
            <person name="White O."/>
            <person name="Eisen J.A."/>
            <person name="Salzberg S.L."/>
            <person name="Fraser C.M."/>
            <person name="Venter J.C."/>
        </authorList>
    </citation>
    <scope>NUCLEOTIDE SEQUENCE [LARGE SCALE GENOMIC DNA]</scope>
    <source>
        <strain>cv. Columbia</strain>
    </source>
</reference>
<reference key="3">
    <citation type="journal article" date="2017" name="Plant J.">
        <title>Araport11: a complete reannotation of the Arabidopsis thaliana reference genome.</title>
        <authorList>
            <person name="Cheng C.Y."/>
            <person name="Krishnakumar V."/>
            <person name="Chan A.P."/>
            <person name="Thibaud-Nissen F."/>
            <person name="Schobel S."/>
            <person name="Town C.D."/>
        </authorList>
    </citation>
    <scope>GENOME REANNOTATION</scope>
    <source>
        <strain>cv. Columbia</strain>
    </source>
</reference>
<reference key="4">
    <citation type="journal article" date="2003" name="Science">
        <title>Empirical analysis of transcriptional activity in the Arabidopsis genome.</title>
        <authorList>
            <person name="Yamada K."/>
            <person name="Lim J."/>
            <person name="Dale J.M."/>
            <person name="Chen H."/>
            <person name="Shinn P."/>
            <person name="Palm C.J."/>
            <person name="Southwick A.M."/>
            <person name="Wu H.C."/>
            <person name="Kim C.J."/>
            <person name="Nguyen M."/>
            <person name="Pham P.K."/>
            <person name="Cheuk R.F."/>
            <person name="Karlin-Newmann G."/>
            <person name="Liu S.X."/>
            <person name="Lam B."/>
            <person name="Sakano H."/>
            <person name="Wu T."/>
            <person name="Yu G."/>
            <person name="Miranda M."/>
            <person name="Quach H.L."/>
            <person name="Tripp M."/>
            <person name="Chang C.H."/>
            <person name="Lee J.M."/>
            <person name="Toriumi M.J."/>
            <person name="Chan M.M."/>
            <person name="Tang C.C."/>
            <person name="Onodera C.S."/>
            <person name="Deng J.M."/>
            <person name="Akiyama K."/>
            <person name="Ansari Y."/>
            <person name="Arakawa T."/>
            <person name="Banh J."/>
            <person name="Banno F."/>
            <person name="Bowser L."/>
            <person name="Brooks S.Y."/>
            <person name="Carninci P."/>
            <person name="Chao Q."/>
            <person name="Choy N."/>
            <person name="Enju A."/>
            <person name="Goldsmith A.D."/>
            <person name="Gurjal M."/>
            <person name="Hansen N.F."/>
            <person name="Hayashizaki Y."/>
            <person name="Johnson-Hopson C."/>
            <person name="Hsuan V.W."/>
            <person name="Iida K."/>
            <person name="Karnes M."/>
            <person name="Khan S."/>
            <person name="Koesema E."/>
            <person name="Ishida J."/>
            <person name="Jiang P.X."/>
            <person name="Jones T."/>
            <person name="Kawai J."/>
            <person name="Kamiya A."/>
            <person name="Meyers C."/>
            <person name="Nakajima M."/>
            <person name="Narusaka M."/>
            <person name="Seki M."/>
            <person name="Sakurai T."/>
            <person name="Satou M."/>
            <person name="Tamse R."/>
            <person name="Vaysberg M."/>
            <person name="Wallender E.K."/>
            <person name="Wong C."/>
            <person name="Yamamura Y."/>
            <person name="Yuan S."/>
            <person name="Shinozaki K."/>
            <person name="Davis R.W."/>
            <person name="Theologis A."/>
            <person name="Ecker J.R."/>
        </authorList>
    </citation>
    <scope>NUCLEOTIDE SEQUENCE [LARGE SCALE MRNA]</scope>
    <source>
        <strain>cv. Columbia</strain>
    </source>
</reference>
<reference key="5">
    <citation type="journal article" date="2007" name="Plant Physiol.">
        <title>Repression of the LEAFY COTYLEDON 1/B3 regulatory network in plant embryo development by VP1/ABSCISIC ACID INSENSITIVE 3-LIKE B3 genes.</title>
        <authorList>
            <person name="Suzuki M."/>
            <person name="Wang H.H.-Y."/>
            <person name="McCarty D.R."/>
        </authorList>
    </citation>
    <scope>FUNCTION</scope>
</reference>
<reference key="6">
    <citation type="journal article" date="2007" name="Proc. Natl. Acad. Sci. U.S.A.">
        <title>Two B3 domain transcriptional repressors prevent sugar-inducible expression of seed maturation genes in Arabidopsis seedlings.</title>
        <authorList>
            <person name="Tsukagoshi H."/>
            <person name="Morikami A."/>
            <person name="Nakamura K."/>
        </authorList>
    </citation>
    <scope>FUNCTION</scope>
</reference>
<reference key="7">
    <citation type="journal article" date="2008" name="Trends Plant Sci.">
        <title>The plant B3 superfamily.</title>
        <authorList>
            <person name="Swaminathan K."/>
            <person name="Peterson K."/>
            <person name="Jack T."/>
        </authorList>
    </citation>
    <scope>GENE FAMILY</scope>
</reference>
<reference key="8">
    <citation type="journal article" date="2010" name="J. Mol. Biol.">
        <title>PAH-domain-specific interactions of the Arabidopsis transcription coregulator SIN3-LIKE1 (SNL1) with telomere-binding protein 1 and ALWAYS EARLY2 Myb-DNA binding factors.</title>
        <authorList>
            <person name="Bowen A.J."/>
            <person name="Gonzalez D."/>
            <person name="Mullins J.G."/>
            <person name="Bhatt A.M."/>
            <person name="Martinez A."/>
            <person name="Conlan R.S."/>
        </authorList>
    </citation>
    <scope>INTERACTION WITH SNL1</scope>
</reference>